<sequence>MPHYILKKSFYEQSSLTVAGKLLGKKLLFNQHQGIITETEAYIGQDDPAAHSARGYTKRTSVMFGSPGFSYVYFIYGMYYCLNVVTEQEGFPAAVLIRGIVLLSENKPNTIINGPGKLCKILQITKEHNNTDITQKYNFCICNTDINIDNYICTPRIGISKGKEKFWRFVIPDLTFLLNV</sequence>
<protein>
    <recommendedName>
        <fullName evidence="1">Putative 3-methyladenine DNA glycosylase</fullName>
        <ecNumber evidence="1">3.2.2.-</ecNumber>
    </recommendedName>
</protein>
<reference key="1">
    <citation type="journal article" date="2006" name="PLoS Genet.">
        <title>Comparative genomics of emerging human ehrlichiosis agents.</title>
        <authorList>
            <person name="Dunning Hotopp J.C."/>
            <person name="Lin M."/>
            <person name="Madupu R."/>
            <person name="Crabtree J."/>
            <person name="Angiuoli S.V."/>
            <person name="Eisen J.A."/>
            <person name="Seshadri R."/>
            <person name="Ren Q."/>
            <person name="Wu M."/>
            <person name="Utterback T.R."/>
            <person name="Smith S."/>
            <person name="Lewis M."/>
            <person name="Khouri H."/>
            <person name="Zhang C."/>
            <person name="Niu H."/>
            <person name="Lin Q."/>
            <person name="Ohashi N."/>
            <person name="Zhi N."/>
            <person name="Nelson W.C."/>
            <person name="Brinkac L.M."/>
            <person name="Dodson R.J."/>
            <person name="Rosovitz M.J."/>
            <person name="Sundaram J.P."/>
            <person name="Daugherty S.C."/>
            <person name="Davidsen T."/>
            <person name="Durkin A.S."/>
            <person name="Gwinn M.L."/>
            <person name="Haft D.H."/>
            <person name="Selengut J.D."/>
            <person name="Sullivan S.A."/>
            <person name="Zafar N."/>
            <person name="Zhou L."/>
            <person name="Benahmed F."/>
            <person name="Forberger H."/>
            <person name="Halpin R."/>
            <person name="Mulligan S."/>
            <person name="Robinson J."/>
            <person name="White O."/>
            <person name="Rikihisa Y."/>
            <person name="Tettelin H."/>
        </authorList>
    </citation>
    <scope>NUCLEOTIDE SEQUENCE [LARGE SCALE GENOMIC DNA]</scope>
    <source>
        <strain>ATCC CRL-10679 / Arkansas</strain>
    </source>
</reference>
<gene>
    <name type="ordered locus">ECH_0277</name>
</gene>
<feature type="chain" id="PRO_0000265017" description="Putative 3-methyladenine DNA glycosylase">
    <location>
        <begin position="1"/>
        <end position="180"/>
    </location>
</feature>
<comment type="similarity">
    <text evidence="1">Belongs to the DNA glycosylase MPG family.</text>
</comment>
<dbReference type="EC" id="3.2.2.-" evidence="1"/>
<dbReference type="EMBL" id="CP000236">
    <property type="protein sequence ID" value="ABD44538.1"/>
    <property type="molecule type" value="Genomic_DNA"/>
</dbReference>
<dbReference type="RefSeq" id="WP_011452502.1">
    <property type="nucleotide sequence ID" value="NC_007799.1"/>
</dbReference>
<dbReference type="SMR" id="Q2GHI5"/>
<dbReference type="STRING" id="205920.ECH_0277"/>
<dbReference type="KEGG" id="ech:ECH_0277"/>
<dbReference type="eggNOG" id="COG2094">
    <property type="taxonomic scope" value="Bacteria"/>
</dbReference>
<dbReference type="HOGENOM" id="CLU_060471_4_1_5"/>
<dbReference type="OrthoDB" id="9794313at2"/>
<dbReference type="Proteomes" id="UP000008320">
    <property type="component" value="Chromosome"/>
</dbReference>
<dbReference type="GO" id="GO:0003905">
    <property type="term" value="F:alkylbase DNA N-glycosylase activity"/>
    <property type="evidence" value="ECO:0007669"/>
    <property type="project" value="InterPro"/>
</dbReference>
<dbReference type="GO" id="GO:0003677">
    <property type="term" value="F:DNA binding"/>
    <property type="evidence" value="ECO:0007669"/>
    <property type="project" value="InterPro"/>
</dbReference>
<dbReference type="GO" id="GO:0006284">
    <property type="term" value="P:base-excision repair"/>
    <property type="evidence" value="ECO:0007669"/>
    <property type="project" value="InterPro"/>
</dbReference>
<dbReference type="CDD" id="cd00540">
    <property type="entry name" value="AAG"/>
    <property type="match status" value="1"/>
</dbReference>
<dbReference type="Gene3D" id="3.10.300.10">
    <property type="entry name" value="Methylpurine-DNA glycosylase (MPG)"/>
    <property type="match status" value="1"/>
</dbReference>
<dbReference type="HAMAP" id="MF_00527">
    <property type="entry name" value="3MGH"/>
    <property type="match status" value="1"/>
</dbReference>
<dbReference type="InterPro" id="IPR011034">
    <property type="entry name" value="Formyl_transferase-like_C_sf"/>
</dbReference>
<dbReference type="InterPro" id="IPR003180">
    <property type="entry name" value="MPG"/>
</dbReference>
<dbReference type="InterPro" id="IPR036995">
    <property type="entry name" value="MPG_sf"/>
</dbReference>
<dbReference type="NCBIfam" id="TIGR00567">
    <property type="entry name" value="3mg"/>
    <property type="match status" value="1"/>
</dbReference>
<dbReference type="NCBIfam" id="NF002004">
    <property type="entry name" value="PRK00802.1-4"/>
    <property type="match status" value="1"/>
</dbReference>
<dbReference type="PANTHER" id="PTHR10429">
    <property type="entry name" value="DNA-3-METHYLADENINE GLYCOSYLASE"/>
    <property type="match status" value="1"/>
</dbReference>
<dbReference type="PANTHER" id="PTHR10429:SF0">
    <property type="entry name" value="DNA-3-METHYLADENINE GLYCOSYLASE"/>
    <property type="match status" value="1"/>
</dbReference>
<dbReference type="Pfam" id="PF02245">
    <property type="entry name" value="Pur_DNA_glyco"/>
    <property type="match status" value="1"/>
</dbReference>
<dbReference type="SUPFAM" id="SSF50486">
    <property type="entry name" value="FMT C-terminal domain-like"/>
    <property type="match status" value="1"/>
</dbReference>
<name>3MGH_EHRCR</name>
<evidence type="ECO:0000255" key="1">
    <source>
        <dbReference type="HAMAP-Rule" id="MF_00527"/>
    </source>
</evidence>
<organism>
    <name type="scientific">Ehrlichia chaffeensis (strain ATCC CRL-10679 / Arkansas)</name>
    <dbReference type="NCBI Taxonomy" id="205920"/>
    <lineage>
        <taxon>Bacteria</taxon>
        <taxon>Pseudomonadati</taxon>
        <taxon>Pseudomonadota</taxon>
        <taxon>Alphaproteobacteria</taxon>
        <taxon>Rickettsiales</taxon>
        <taxon>Anaplasmataceae</taxon>
        <taxon>Ehrlichia</taxon>
    </lineage>
</organism>
<proteinExistence type="inferred from homology"/>
<keyword id="KW-0227">DNA damage</keyword>
<keyword id="KW-0234">DNA repair</keyword>
<keyword id="KW-0378">Hydrolase</keyword>
<keyword id="KW-1185">Reference proteome</keyword>
<accession>Q2GHI5</accession>